<evidence type="ECO:0000255" key="1">
    <source>
        <dbReference type="HAMAP-Rule" id="MF_02099"/>
    </source>
</evidence>
<sequence length="113" mass="12659">MHELSLCQSAVEIIQQQAEQHGVARVTGVWLEIGALSCVEERAVRFSFDIACQGTLAQGCELHIDYRPAQAWCWDCSQVVEILRHDAQCPHCHGDRLRVDTGDSLKVKSIEVE</sequence>
<reference key="1">
    <citation type="journal article" date="2001" name="Nature">
        <title>Complete genome sequence of Salmonella enterica serovar Typhimurium LT2.</title>
        <authorList>
            <person name="McClelland M."/>
            <person name="Sanderson K.E."/>
            <person name="Spieth J."/>
            <person name="Clifton S.W."/>
            <person name="Latreille P."/>
            <person name="Courtney L."/>
            <person name="Porwollik S."/>
            <person name="Ali J."/>
            <person name="Dante M."/>
            <person name="Du F."/>
            <person name="Hou S."/>
            <person name="Layman D."/>
            <person name="Leonard S."/>
            <person name="Nguyen C."/>
            <person name="Scott K."/>
            <person name="Holmes A."/>
            <person name="Grewal N."/>
            <person name="Mulvaney E."/>
            <person name="Ryan E."/>
            <person name="Sun H."/>
            <person name="Florea L."/>
            <person name="Miller W."/>
            <person name="Stoneking T."/>
            <person name="Nhan M."/>
            <person name="Waterston R."/>
            <person name="Wilson R.K."/>
        </authorList>
    </citation>
    <scope>NUCLEOTIDE SEQUENCE [LARGE SCALE GENOMIC DNA]</scope>
    <source>
        <strain>LT2 / SGSC1412 / ATCC 700720</strain>
    </source>
</reference>
<comment type="function">
    <text evidence="1">Involved in the maturation of [NiFe] hydrogenases. Required for nickel insertion into the metal center of the hydrogenase.</text>
</comment>
<comment type="similarity">
    <text evidence="1">Belongs to the HypA/HybF family. HybF subfamily.</text>
</comment>
<keyword id="KW-0479">Metal-binding</keyword>
<keyword id="KW-0533">Nickel</keyword>
<keyword id="KW-1185">Reference proteome</keyword>
<keyword id="KW-0862">Zinc</keyword>
<protein>
    <recommendedName>
        <fullName evidence="1">Hydrogenase maturation factor HybF</fullName>
    </recommendedName>
</protein>
<feature type="chain" id="PRO_0000129070" description="Hydrogenase maturation factor HybF">
    <location>
        <begin position="1"/>
        <end position="113"/>
    </location>
</feature>
<feature type="binding site" evidence="1">
    <location>
        <position position="2"/>
    </location>
    <ligand>
        <name>Ni(2+)</name>
        <dbReference type="ChEBI" id="CHEBI:49786"/>
    </ligand>
</feature>
<feature type="binding site" evidence="1">
    <location>
        <position position="3"/>
    </location>
    <ligand>
        <name>Ni(2+)</name>
        <dbReference type="ChEBI" id="CHEBI:49786"/>
    </ligand>
</feature>
<feature type="binding site" evidence="1">
    <location>
        <position position="73"/>
    </location>
    <ligand>
        <name>Zn(2+)</name>
        <dbReference type="ChEBI" id="CHEBI:29105"/>
    </ligand>
</feature>
<feature type="binding site" evidence="1">
    <location>
        <position position="76"/>
    </location>
    <ligand>
        <name>Zn(2+)</name>
        <dbReference type="ChEBI" id="CHEBI:29105"/>
    </ligand>
</feature>
<feature type="binding site" evidence="1">
    <location>
        <position position="89"/>
    </location>
    <ligand>
        <name>Zn(2+)</name>
        <dbReference type="ChEBI" id="CHEBI:29105"/>
    </ligand>
</feature>
<feature type="binding site" evidence="1">
    <location>
        <position position="92"/>
    </location>
    <ligand>
        <name>Zn(2+)</name>
        <dbReference type="ChEBI" id="CHEBI:29105"/>
    </ligand>
</feature>
<gene>
    <name evidence="1" type="primary">hybF</name>
    <name type="ordered locus">STM3144</name>
</gene>
<organism>
    <name type="scientific">Salmonella typhimurium (strain LT2 / SGSC1412 / ATCC 700720)</name>
    <dbReference type="NCBI Taxonomy" id="99287"/>
    <lineage>
        <taxon>Bacteria</taxon>
        <taxon>Pseudomonadati</taxon>
        <taxon>Pseudomonadota</taxon>
        <taxon>Gammaproteobacteria</taxon>
        <taxon>Enterobacterales</taxon>
        <taxon>Enterobacteriaceae</taxon>
        <taxon>Salmonella</taxon>
    </lineage>
</organism>
<proteinExistence type="inferred from homology"/>
<name>HYBF_SALTY</name>
<dbReference type="EMBL" id="AE006468">
    <property type="protein sequence ID" value="AAL22018.1"/>
    <property type="molecule type" value="Genomic_DNA"/>
</dbReference>
<dbReference type="RefSeq" id="NP_462059.1">
    <property type="nucleotide sequence ID" value="NC_003197.2"/>
</dbReference>
<dbReference type="SMR" id="P64421"/>
<dbReference type="STRING" id="99287.STM3144"/>
<dbReference type="PaxDb" id="99287-STM3144"/>
<dbReference type="GeneID" id="1254667"/>
<dbReference type="KEGG" id="stm:STM3144"/>
<dbReference type="PATRIC" id="fig|99287.12.peg.3332"/>
<dbReference type="HOGENOM" id="CLU_126929_0_0_6"/>
<dbReference type="OMA" id="ILLCPCG"/>
<dbReference type="PhylomeDB" id="P64421"/>
<dbReference type="BioCyc" id="SENT99287:STM3144-MONOMER"/>
<dbReference type="Proteomes" id="UP000001014">
    <property type="component" value="Chromosome"/>
</dbReference>
<dbReference type="GO" id="GO:0016151">
    <property type="term" value="F:nickel cation binding"/>
    <property type="evidence" value="ECO:0000318"/>
    <property type="project" value="GO_Central"/>
</dbReference>
<dbReference type="GO" id="GO:0008270">
    <property type="term" value="F:zinc ion binding"/>
    <property type="evidence" value="ECO:0000318"/>
    <property type="project" value="GO_Central"/>
</dbReference>
<dbReference type="GO" id="GO:0051604">
    <property type="term" value="P:protein maturation"/>
    <property type="evidence" value="ECO:0000318"/>
    <property type="project" value="GO_Central"/>
</dbReference>
<dbReference type="GO" id="GO:0036211">
    <property type="term" value="P:protein modification process"/>
    <property type="evidence" value="ECO:0007669"/>
    <property type="project" value="UniProtKB-UniRule"/>
</dbReference>
<dbReference type="FunFam" id="3.30.2320.80:FF:000001">
    <property type="entry name" value="Hydrogenase maturation factor HypA"/>
    <property type="match status" value="1"/>
</dbReference>
<dbReference type="Gene3D" id="3.30.2320.80">
    <property type="match status" value="1"/>
</dbReference>
<dbReference type="HAMAP" id="MF_02099">
    <property type="entry name" value="HybF_subfam"/>
    <property type="match status" value="1"/>
</dbReference>
<dbReference type="HAMAP" id="MF_00213">
    <property type="entry name" value="HypA_HybF"/>
    <property type="match status" value="1"/>
</dbReference>
<dbReference type="InterPro" id="IPR039002">
    <property type="entry name" value="HybF"/>
</dbReference>
<dbReference type="InterPro" id="IPR020538">
    <property type="entry name" value="Hydgase_Ni_incorp_HypA/HybF_CS"/>
</dbReference>
<dbReference type="InterPro" id="IPR000688">
    <property type="entry name" value="HypA/HybF"/>
</dbReference>
<dbReference type="NCBIfam" id="TIGR00100">
    <property type="entry name" value="hypA"/>
    <property type="match status" value="1"/>
</dbReference>
<dbReference type="NCBIfam" id="NF002979">
    <property type="entry name" value="PRK03681.1"/>
    <property type="match status" value="1"/>
</dbReference>
<dbReference type="NCBIfam" id="NF009046">
    <property type="entry name" value="PRK12380.1"/>
    <property type="match status" value="1"/>
</dbReference>
<dbReference type="PANTHER" id="PTHR34535:SF4">
    <property type="entry name" value="HYDROGENASE MATURATION FACTOR HYBF"/>
    <property type="match status" value="1"/>
</dbReference>
<dbReference type="PANTHER" id="PTHR34535">
    <property type="entry name" value="HYDROGENASE MATURATION FACTOR HYPA"/>
    <property type="match status" value="1"/>
</dbReference>
<dbReference type="Pfam" id="PF01155">
    <property type="entry name" value="HypA"/>
    <property type="match status" value="1"/>
</dbReference>
<dbReference type="PIRSF" id="PIRSF004761">
    <property type="entry name" value="Hydrgn_mat_HypA"/>
    <property type="match status" value="1"/>
</dbReference>
<dbReference type="PROSITE" id="PS01249">
    <property type="entry name" value="HYPA"/>
    <property type="match status" value="1"/>
</dbReference>
<accession>P64421</accession>
<accession>Q8XEP6</accession>